<comment type="function">
    <text evidence="1 5 6">Ion channel with a slight anion preference. Also able to release ATP (By similarity). Plays a role in regulating neurogenesis and apoptosis in keratinocytes (PubMed:20529862, PubMed:34985913).</text>
</comment>
<comment type="catalytic activity">
    <reaction evidence="1">
        <text>ATP(in) = ATP(out)</text>
        <dbReference type="Rhea" id="RHEA:75687"/>
        <dbReference type="ChEBI" id="CHEBI:30616"/>
    </reaction>
</comment>
<comment type="catalytic activity">
    <reaction evidence="1">
        <text>chloride(in) = chloride(out)</text>
        <dbReference type="Rhea" id="RHEA:29823"/>
        <dbReference type="ChEBI" id="CHEBI:17996"/>
    </reaction>
</comment>
<comment type="catalytic activity">
    <reaction evidence="1">
        <text>iodide(out) = iodide(in)</text>
        <dbReference type="Rhea" id="RHEA:66324"/>
        <dbReference type="ChEBI" id="CHEBI:16382"/>
    </reaction>
</comment>
<comment type="catalytic activity">
    <reaction evidence="1">
        <text>Na(+)(in) = Na(+)(out)</text>
        <dbReference type="Rhea" id="RHEA:34963"/>
        <dbReference type="ChEBI" id="CHEBI:29101"/>
    </reaction>
</comment>
<comment type="catalytic activity">
    <reaction evidence="1">
        <text>D-gluconate(in) = D-gluconate(out)</text>
        <dbReference type="Rhea" id="RHEA:76139"/>
        <dbReference type="ChEBI" id="CHEBI:18391"/>
    </reaction>
</comment>
<comment type="subunit">
    <text evidence="1">Homoheptameric.</text>
</comment>
<comment type="subcellular location">
    <subcellularLocation>
        <location evidence="5">Cell membrane</location>
        <topology evidence="3">Multi-pass membrane protein</topology>
    </subcellularLocation>
    <subcellularLocation>
        <location evidence="5">Golgi apparatus membrane</location>
        <topology evidence="3">Multi-pass membrane protein</topology>
    </subcellularLocation>
    <subcellularLocation>
        <location evidence="5">Endoplasmic reticulum membrane</location>
        <topology evidence="3">Multi-pass membrane protein</topology>
    </subcellularLocation>
    <text evidence="5">Localizes to Golgi apparatus and endoplasmic reticulum in multipotential neural stem and progenitor cells and to plasma membrane in terminally differentiated neurons.</text>
</comment>
<comment type="alternative products">
    <event type="alternative splicing"/>
    <isoform>
        <id>Q6IMP4-1</id>
        <name>1</name>
        <sequence type="displayed"/>
    </isoform>
    <isoform>
        <id>Q6IMP4-2</id>
        <name>2</name>
        <sequence type="described" ref="VSP_039093 VSP_039094"/>
    </isoform>
</comment>
<comment type="tissue specificity">
    <text evidence="5 6">Expression is enriched in central nervous system (PubMed:20529862). Expressed in suprabasal layers of skin epidermis (PubMed:34985913).</text>
</comment>
<comment type="tissue specificity">
    <molecule>Isoform 2</molecule>
    <text evidence="6">More aboundantly expressed in skin.</text>
</comment>
<comment type="developmental stage">
    <text evidence="5">Expressed by type I neural stem and progenitor cells in neonatal hippocampus, with an increase of expression at postnatal day 7. Expression is restricted to type I and IIa early stem-like hippocampal neural progenitors and terminally differentiated mature granule neurons.</text>
</comment>
<comment type="PTM">
    <text evidence="5">S-palmitoylated in neural stem and progenitor cells.</text>
</comment>
<comment type="PTM">
    <text evidence="6">Cleaved by CASP3 and CASP7 during apoptosis. Cleavage has no effect on it function.</text>
</comment>
<comment type="similarity">
    <text evidence="3">Belongs to the pannexin family.</text>
</comment>
<comment type="sequence caution" evidence="8">
    <conflict type="frameshift">
        <sequence resource="EMBL-CDS" id="DAA00307"/>
    </conflict>
</comment>
<gene>
    <name type="primary">Panx2</name>
</gene>
<proteinExistence type="evidence at protein level"/>
<accession>Q6IMP4</accession>
<accession>B1PL20</accession>
<accession>Q4JGM2</accession>
<dbReference type="EMBL" id="EU446266">
    <property type="protein sequence ID" value="ACA30452.1"/>
    <property type="molecule type" value="mRNA"/>
</dbReference>
<dbReference type="EMBL" id="AC113069">
    <property type="status" value="NOT_ANNOTATED_CDS"/>
    <property type="molecule type" value="Genomic_DNA"/>
</dbReference>
<dbReference type="EMBL" id="DQ093579">
    <property type="protein sequence ID" value="AAY98749.1"/>
    <property type="molecule type" value="mRNA"/>
</dbReference>
<dbReference type="EMBL" id="BK000624">
    <property type="protein sequence ID" value="DAA00307.1"/>
    <property type="status" value="ALT_FRAME"/>
    <property type="molecule type" value="mRNA"/>
</dbReference>
<dbReference type="CCDS" id="CCDS49695.1">
    <molecule id="Q6IMP4-1"/>
</dbReference>
<dbReference type="RefSeq" id="NP_001002005.2">
    <molecule id="Q6IMP4-1"/>
    <property type="nucleotide sequence ID" value="NM_001002005.2"/>
</dbReference>
<dbReference type="SMR" id="Q6IMP4"/>
<dbReference type="BioGRID" id="240428">
    <property type="interactions" value="2"/>
</dbReference>
<dbReference type="FunCoup" id="Q6IMP4">
    <property type="interactions" value="369"/>
</dbReference>
<dbReference type="STRING" id="10090.ENSMUSP00000124354"/>
<dbReference type="GlyConnect" id="2575">
    <property type="glycosylation" value="1 N-Linked glycan (1 site)"/>
</dbReference>
<dbReference type="GlyCosmos" id="Q6IMP4">
    <property type="glycosylation" value="1 site, 1 glycan"/>
</dbReference>
<dbReference type="GlyGen" id="Q6IMP4">
    <property type="glycosylation" value="3 sites, 1 N-linked glycan (1 site), 1 O-linked glycan (2 sites)"/>
</dbReference>
<dbReference type="iPTMnet" id="Q6IMP4"/>
<dbReference type="PhosphoSitePlus" id="Q6IMP4"/>
<dbReference type="SwissPalm" id="Q6IMP4"/>
<dbReference type="PaxDb" id="10090-ENSMUSP00000124354"/>
<dbReference type="PeptideAtlas" id="Q6IMP4"/>
<dbReference type="ProteomicsDB" id="294326">
    <molecule id="Q6IMP4-1"/>
</dbReference>
<dbReference type="ProteomicsDB" id="294327">
    <molecule id="Q6IMP4-2"/>
</dbReference>
<dbReference type="Antibodypedia" id="14165">
    <property type="antibodies" value="184 antibodies from 28 providers"/>
</dbReference>
<dbReference type="DNASU" id="406218"/>
<dbReference type="Ensembl" id="ENSMUST00000161372.2">
    <molecule id="Q6IMP4-2"/>
    <property type="protein sequence ID" value="ENSMUSP00000125514.2"/>
    <property type="gene ID" value="ENSMUSG00000058441.8"/>
</dbReference>
<dbReference type="Ensembl" id="ENSMUST00000162424.2">
    <molecule id="Q6IMP4-1"/>
    <property type="protein sequence ID" value="ENSMUSP00000124354.2"/>
    <property type="gene ID" value="ENSMUSG00000058441.8"/>
</dbReference>
<dbReference type="GeneID" id="406218"/>
<dbReference type="KEGG" id="mmu:406218"/>
<dbReference type="UCSC" id="uc007xfa.2">
    <molecule id="Q6IMP4-1"/>
    <property type="organism name" value="mouse"/>
</dbReference>
<dbReference type="UCSC" id="uc011zxq.1">
    <molecule id="Q6IMP4-2"/>
    <property type="organism name" value="mouse"/>
</dbReference>
<dbReference type="AGR" id="MGI:1890615"/>
<dbReference type="CTD" id="56666"/>
<dbReference type="MGI" id="MGI:1890615">
    <property type="gene designation" value="Panx2"/>
</dbReference>
<dbReference type="VEuPathDB" id="HostDB:ENSMUSG00000058441"/>
<dbReference type="eggNOG" id="ENOG502QT63">
    <property type="taxonomic scope" value="Eukaryota"/>
</dbReference>
<dbReference type="GeneTree" id="ENSGT00940000153972"/>
<dbReference type="HOGENOM" id="CLU_027715_0_0_1"/>
<dbReference type="InParanoid" id="Q6IMP4"/>
<dbReference type="OMA" id="CNPTHPL"/>
<dbReference type="OrthoDB" id="8620476at2759"/>
<dbReference type="PhylomeDB" id="Q6IMP4"/>
<dbReference type="TreeFam" id="TF333142"/>
<dbReference type="Reactome" id="R-MMU-112303">
    <property type="pathway name" value="Electric Transmission Across Gap Junctions"/>
</dbReference>
<dbReference type="BioGRID-ORCS" id="406218">
    <property type="hits" value="2 hits in 79 CRISPR screens"/>
</dbReference>
<dbReference type="CD-CODE" id="CE726F99">
    <property type="entry name" value="Postsynaptic density"/>
</dbReference>
<dbReference type="PRO" id="PR:Q6IMP4"/>
<dbReference type="Proteomes" id="UP000000589">
    <property type="component" value="Chromosome 15"/>
</dbReference>
<dbReference type="RNAct" id="Q6IMP4">
    <property type="molecule type" value="protein"/>
</dbReference>
<dbReference type="Bgee" id="ENSMUSG00000058441">
    <property type="expression patterns" value="Expressed in medial vestibular nucleus and 104 other cell types or tissues"/>
</dbReference>
<dbReference type="ExpressionAtlas" id="Q6IMP4">
    <property type="expression patterns" value="baseline and differential"/>
</dbReference>
<dbReference type="GO" id="GO:0005737">
    <property type="term" value="C:cytoplasm"/>
    <property type="evidence" value="ECO:0000314"/>
    <property type="project" value="MGI"/>
</dbReference>
<dbReference type="GO" id="GO:0005789">
    <property type="term" value="C:endoplasmic reticulum membrane"/>
    <property type="evidence" value="ECO:0007669"/>
    <property type="project" value="UniProtKB-SubCell"/>
</dbReference>
<dbReference type="GO" id="GO:0000139">
    <property type="term" value="C:Golgi membrane"/>
    <property type="evidence" value="ECO:0007669"/>
    <property type="project" value="UniProtKB-SubCell"/>
</dbReference>
<dbReference type="GO" id="GO:0005886">
    <property type="term" value="C:plasma membrane"/>
    <property type="evidence" value="ECO:0007669"/>
    <property type="project" value="UniProtKB-SubCell"/>
</dbReference>
<dbReference type="GO" id="GO:0005243">
    <property type="term" value="F:gap junction channel activity"/>
    <property type="evidence" value="ECO:0007669"/>
    <property type="project" value="Ensembl"/>
</dbReference>
<dbReference type="GO" id="GO:0044877">
    <property type="term" value="F:protein-containing complex binding"/>
    <property type="evidence" value="ECO:0007669"/>
    <property type="project" value="Ensembl"/>
</dbReference>
<dbReference type="GO" id="GO:0005198">
    <property type="term" value="F:structural molecule activity"/>
    <property type="evidence" value="ECO:0000250"/>
    <property type="project" value="UniProtKB"/>
</dbReference>
<dbReference type="GO" id="GO:0007267">
    <property type="term" value="P:cell-cell signaling"/>
    <property type="evidence" value="ECO:0007669"/>
    <property type="project" value="Ensembl"/>
</dbReference>
<dbReference type="GO" id="GO:0006812">
    <property type="term" value="P:monoatomic cation transport"/>
    <property type="evidence" value="ECO:0007669"/>
    <property type="project" value="InterPro"/>
</dbReference>
<dbReference type="GO" id="GO:0034220">
    <property type="term" value="P:monoatomic ion transmembrane transport"/>
    <property type="evidence" value="ECO:0007669"/>
    <property type="project" value="UniProtKB-KW"/>
</dbReference>
<dbReference type="GO" id="GO:0032732">
    <property type="term" value="P:positive regulation of interleukin-1 production"/>
    <property type="evidence" value="ECO:0007669"/>
    <property type="project" value="InterPro"/>
</dbReference>
<dbReference type="GO" id="GO:0002931">
    <property type="term" value="P:response to ischemia"/>
    <property type="evidence" value="ECO:0000316"/>
    <property type="project" value="MGI"/>
</dbReference>
<dbReference type="InterPro" id="IPR000990">
    <property type="entry name" value="Innexin"/>
</dbReference>
<dbReference type="InterPro" id="IPR039099">
    <property type="entry name" value="Pannexin"/>
</dbReference>
<dbReference type="PANTHER" id="PTHR15759">
    <property type="entry name" value="PANNEXIN"/>
    <property type="match status" value="1"/>
</dbReference>
<dbReference type="PANTHER" id="PTHR15759:SF7">
    <property type="entry name" value="PANNEXIN-2"/>
    <property type="match status" value="1"/>
</dbReference>
<dbReference type="Pfam" id="PF00876">
    <property type="entry name" value="Innexin"/>
    <property type="match status" value="1"/>
</dbReference>
<dbReference type="PROSITE" id="PS51013">
    <property type="entry name" value="PANNEXIN"/>
    <property type="match status" value="1"/>
</dbReference>
<organism>
    <name type="scientific">Mus musculus</name>
    <name type="common">Mouse</name>
    <dbReference type="NCBI Taxonomy" id="10090"/>
    <lineage>
        <taxon>Eukaryota</taxon>
        <taxon>Metazoa</taxon>
        <taxon>Chordata</taxon>
        <taxon>Craniata</taxon>
        <taxon>Vertebrata</taxon>
        <taxon>Euteleostomi</taxon>
        <taxon>Mammalia</taxon>
        <taxon>Eutheria</taxon>
        <taxon>Euarchontoglires</taxon>
        <taxon>Glires</taxon>
        <taxon>Rodentia</taxon>
        <taxon>Myomorpha</taxon>
        <taxon>Muroidea</taxon>
        <taxon>Muridae</taxon>
        <taxon>Murinae</taxon>
        <taxon>Mus</taxon>
        <taxon>Mus</taxon>
    </lineage>
</organism>
<name>PANX2_MOUSE</name>
<reference key="1">
    <citation type="submission" date="2008-02" db="EMBL/GenBank/DDBJ databases">
        <authorList>
            <person name="Skoblov M."/>
            <person name="Baranova A."/>
        </authorList>
    </citation>
    <scope>NUCLEOTIDE SEQUENCE [MRNA] (ISOFORM 2)</scope>
</reference>
<reference key="2">
    <citation type="journal article" date="2009" name="PLoS Biol.">
        <title>Lineage-specific biology revealed by a finished genome assembly of the mouse.</title>
        <authorList>
            <person name="Church D.M."/>
            <person name="Goodstadt L."/>
            <person name="Hillier L.W."/>
            <person name="Zody M.C."/>
            <person name="Goldstein S."/>
            <person name="She X."/>
            <person name="Bult C.J."/>
            <person name="Agarwala R."/>
            <person name="Cherry J.L."/>
            <person name="DiCuccio M."/>
            <person name="Hlavina W."/>
            <person name="Kapustin Y."/>
            <person name="Meric P."/>
            <person name="Maglott D."/>
            <person name="Birtle Z."/>
            <person name="Marques A.C."/>
            <person name="Graves T."/>
            <person name="Zhou S."/>
            <person name="Teague B."/>
            <person name="Potamousis K."/>
            <person name="Churas C."/>
            <person name="Place M."/>
            <person name="Herschleb J."/>
            <person name="Runnheim R."/>
            <person name="Forrest D."/>
            <person name="Amos-Landgraf J."/>
            <person name="Schwartz D.C."/>
            <person name="Cheng Z."/>
            <person name="Lindblad-Toh K."/>
            <person name="Eichler E.E."/>
            <person name="Ponting C.P."/>
        </authorList>
    </citation>
    <scope>NUCLEOTIDE SEQUENCE [LARGE SCALE GENOMIC DNA]</scope>
    <source>
        <strain>C57BL/6J</strain>
    </source>
</reference>
<reference key="3">
    <citation type="journal article" date="2006" name="Mol. Vis.">
        <title>Molecular characterization of pannexins in the lens.</title>
        <authorList>
            <person name="Dvoriantchikova G."/>
            <person name="Ivanov D."/>
            <person name="Pestova A."/>
            <person name="Shestopalov V."/>
        </authorList>
    </citation>
    <scope>NUCLEOTIDE SEQUENCE [MRNA] OF 11-677 (ISOFORM 1)</scope>
    <source>
        <strain>C57BL/6J</strain>
    </source>
</reference>
<reference key="4">
    <citation type="journal article" date="2004" name="Genomics">
        <title>The mammalian pannexin family is homologous to the invertebrate innexin gap junction proteins.</title>
        <authorList>
            <person name="Baranova A."/>
            <person name="Ivanov D."/>
            <person name="Petrash N."/>
            <person name="Pestova A."/>
            <person name="Skoblov M."/>
            <person name="Kelmanson I."/>
            <person name="Shagin D."/>
            <person name="Nazarenko S."/>
            <person name="Geraymovych E."/>
            <person name="Litvin O."/>
            <person name="Tiunova A."/>
            <person name="Born T.L."/>
            <person name="Usman N."/>
            <person name="Staroverov D."/>
            <person name="Lukyanov S."/>
            <person name="Panchin Y."/>
        </authorList>
    </citation>
    <scope>IDENTIFICATION</scope>
</reference>
<reference key="5">
    <citation type="journal article" date="2010" name="Cell">
        <title>A tissue-specific atlas of mouse protein phosphorylation and expression.</title>
        <authorList>
            <person name="Huttlin E.L."/>
            <person name="Jedrychowski M.P."/>
            <person name="Elias J.E."/>
            <person name="Goswami T."/>
            <person name="Rad R."/>
            <person name="Beausoleil S.A."/>
            <person name="Villen J."/>
            <person name="Haas W."/>
            <person name="Sowa M.E."/>
            <person name="Gygi S.P."/>
        </authorList>
    </citation>
    <scope>PHOSPHORYLATION [LARGE SCALE ANALYSIS] AT SER-593 AND SER-604</scope>
    <scope>IDENTIFICATION BY MASS SPECTROMETRY [LARGE SCALE ANALYSIS]</scope>
    <source>
        <tissue>Brain</tissue>
    </source>
</reference>
<reference key="6">
    <citation type="journal article" date="2010" name="J. Biol. Chem.">
        <title>Pannexin 2 is expressed by postnatal hippocampal neural progenitors and modulates neuronal commitment.</title>
        <authorList>
            <person name="Swayne L.A."/>
            <person name="Sorbara C.D."/>
            <person name="Bennett S.A."/>
        </authorList>
    </citation>
    <scope>FUNCTION</scope>
    <scope>TISSUE SPECIFICITY</scope>
    <scope>SUBCELLULAR LOCATION</scope>
    <scope>DEVELOPMENTAL STAGE</scope>
    <scope>PALMOYLATION</scope>
</reference>
<reference key="7">
    <citation type="journal article" date="2022" name="Mol. Biol. Cell">
        <title>Pannexin 2 is expressed in murine skin and promotes UVB-induced apoptosis of keratinocytes.</title>
        <authorList>
            <person name="Sanchez-Pupo R.E."/>
            <person name="O'Donnell B.L."/>
            <person name="Johnston D."/>
            <person name="Gyenis L."/>
            <person name="Litchfield D.W."/>
            <person name="Penuela S."/>
        </authorList>
    </citation>
    <scope>FUNCTION</scope>
    <scope>TISSUE SPECIFICITY</scope>
    <scope>DEVELOPMENTAL STAGE</scope>
    <scope>CLEAVAGE</scope>
    <scope>MUTAGENESIS OF ASP-416</scope>
</reference>
<protein>
    <recommendedName>
        <fullName>Pannexin-2</fullName>
    </recommendedName>
</protein>
<feature type="chain" id="PRO_0000208489" description="Pannexin-2">
    <location>
        <begin position="1"/>
        <end position="677"/>
    </location>
</feature>
<feature type="topological domain" description="Cytoplasmic" evidence="2">
    <location>
        <begin position="11"/>
        <end position="53"/>
    </location>
</feature>
<feature type="transmembrane region" description="Helical" evidence="3">
    <location>
        <begin position="54"/>
        <end position="74"/>
    </location>
</feature>
<feature type="topological domain" description="Extracellular" evidence="2">
    <location>
        <begin position="75"/>
        <end position="125"/>
    </location>
</feature>
<feature type="transmembrane region" description="Helical" evidence="3">
    <location>
        <begin position="126"/>
        <end position="146"/>
    </location>
</feature>
<feature type="topological domain" description="Cytoplasmic" evidence="2">
    <location>
        <begin position="147"/>
        <end position="230"/>
    </location>
</feature>
<feature type="transmembrane region" description="Helical" evidence="3">
    <location>
        <begin position="231"/>
        <end position="251"/>
    </location>
</feature>
<feature type="topological domain" description="Extracellular" evidence="2">
    <location>
        <begin position="252"/>
        <end position="295"/>
    </location>
</feature>
<feature type="transmembrane region" description="Helical" evidence="3">
    <location>
        <begin position="296"/>
        <end position="316"/>
    </location>
</feature>
<feature type="topological domain" description="Cytoplasmic" evidence="2">
    <location>
        <begin position="317"/>
        <end position="617"/>
    </location>
</feature>
<feature type="region of interest" description="Disordered" evidence="4">
    <location>
        <begin position="394"/>
        <end position="425"/>
    </location>
</feature>
<feature type="region of interest" description="Disordered" evidence="4">
    <location>
        <begin position="485"/>
        <end position="512"/>
    </location>
</feature>
<feature type="compositionally biased region" description="Polar residues" evidence="4">
    <location>
        <begin position="394"/>
        <end position="408"/>
    </location>
</feature>
<feature type="site" description="Cleavage; by CASP3 or CASP7" evidence="6">
    <location>
        <position position="416"/>
    </location>
</feature>
<feature type="modified residue" description="Phosphoserine" evidence="9">
    <location>
        <position position="593"/>
    </location>
</feature>
<feature type="modified residue" description="Phosphoserine" evidence="9">
    <location>
        <position position="604"/>
    </location>
</feature>
<feature type="glycosylation site" description="N-linked (GlcNAc...) asparagine" evidence="2">
    <location>
        <position position="86"/>
    </location>
</feature>
<feature type="splice variant" id="VSP_039093" description="In isoform 2." evidence="7">
    <original>A</original>
    <variation>AARVSSLPS</variation>
    <location>
        <position position="75"/>
    </location>
</feature>
<feature type="splice variant" id="VSP_039094" description="In isoform 2." evidence="7">
    <original>YEAREEEEGGPCAPSDMGDLLSIPPPQQILIATFEEPRTVVSTVEF</original>
    <variation>SSSPPSRSREQL</variation>
    <location>
        <begin position="632"/>
        <end position="677"/>
    </location>
</feature>
<feature type="mutagenesis site" description="Not cleaved by caspases. No effect on function during apoptosis." evidence="6">
    <original>D</original>
    <variation>A</variation>
    <location>
        <position position="416"/>
    </location>
</feature>
<feature type="sequence conflict" description="In Ref. 1; ACA30452." evidence="8" ref="1">
    <original>E</original>
    <variation>G</variation>
    <location>
        <position position="47"/>
    </location>
</feature>
<feature type="sequence conflict" description="In Ref. 1; ACA30452." evidence="8" ref="1">
    <original>G</original>
    <variation>D</variation>
    <location>
        <position position="57"/>
    </location>
</feature>
<feature type="sequence conflict" description="In Ref. 1; ACA30452." evidence="8" ref="1">
    <original>K</original>
    <variation>E</variation>
    <location>
        <position position="526"/>
    </location>
</feature>
<keyword id="KW-0025">Alternative splicing</keyword>
<keyword id="KW-1003">Cell membrane</keyword>
<keyword id="KW-0256">Endoplasmic reticulum</keyword>
<keyword id="KW-0325">Glycoprotein</keyword>
<keyword id="KW-0333">Golgi apparatus</keyword>
<keyword id="KW-0407">Ion channel</keyword>
<keyword id="KW-0406">Ion transport</keyword>
<keyword id="KW-0472">Membrane</keyword>
<keyword id="KW-0597">Phosphoprotein</keyword>
<keyword id="KW-1185">Reference proteome</keyword>
<keyword id="KW-0812">Transmembrane</keyword>
<keyword id="KW-1133">Transmembrane helix</keyword>
<keyword id="KW-0813">Transport</keyword>
<evidence type="ECO:0000250" key="1">
    <source>
        <dbReference type="UniProtKB" id="Q96RD6"/>
    </source>
</evidence>
<evidence type="ECO:0000255" key="2"/>
<evidence type="ECO:0000255" key="3">
    <source>
        <dbReference type="PROSITE-ProRule" id="PRU00351"/>
    </source>
</evidence>
<evidence type="ECO:0000256" key="4">
    <source>
        <dbReference type="SAM" id="MobiDB-lite"/>
    </source>
</evidence>
<evidence type="ECO:0000269" key="5">
    <source>
    </source>
</evidence>
<evidence type="ECO:0000269" key="6">
    <source>
    </source>
</evidence>
<evidence type="ECO:0000303" key="7">
    <source ref="1"/>
</evidence>
<evidence type="ECO:0000305" key="8"/>
<evidence type="ECO:0007744" key="9">
    <source>
    </source>
</evidence>
<sequence length="677" mass="74614">MHHLLEQSADMATALLAGEKLRELILPGSQDDKAGALAALLLQLKLELPFDRVVTIGTVLVPILLVTLVFTKNFAEEPIYCYTPHNFTRDQALYARGYCWTELRDALPGVDASLWPSLFEHKFLPYALLAFAAIMYVPALGWEFLASTRLTSELNFLLQEIDNCYHRAAEGRAPKIEKQIQSKGPGITEREKREIIENAEKEKSPEQNLFEKYLERRGRSNFLAKLYLARHVLILLLSVVPISYLCTYYATQKQNEFTCALGASPDGPVGSAGPTVRVSCKLPSVQLQRIIAGVDIVLLCFMNLIILVNLIHLFIFRKSNFIFDKLNKVGIKTRRQWRRSQFCDINILAMFCNENRDHIKSLNRLDFITNESDLMYDNVVRQLLAALAQSNHDTTPTVRDSGIQTVDPSINPAEPDGSAEPPVVKRPRKKMKWIPTSNPLPQPFKEQLAIMRVENSKTEKPKPVRRKTATDTLIAPLLDAGARAAHHYKGSGGDSGPSSAPPAASEKKHTRHFSLDVHPYILGTKKAKTEAVPPALPASRSQEGGFLSQTEECGLGLAAAPTKDAPLPEKEIPYPTEPALPGLPSGGSFHVCSPPAAPAAASLSPGSLGKADPLTILSRNATHPLLHISTLYEAREEEEGGPCAPSDMGDLLSIPPPQQILIATFEEPRTVVSTVEF</sequence>